<protein>
    <recommendedName>
        <fullName evidence="1">ATP-dependent Clp protease ATP-binding subunit ClpX</fullName>
    </recommendedName>
</protein>
<organism>
    <name type="scientific">Acinetobacter baumannii (strain SDF)</name>
    <dbReference type="NCBI Taxonomy" id="509170"/>
    <lineage>
        <taxon>Bacteria</taxon>
        <taxon>Pseudomonadati</taxon>
        <taxon>Pseudomonadota</taxon>
        <taxon>Gammaproteobacteria</taxon>
        <taxon>Moraxellales</taxon>
        <taxon>Moraxellaceae</taxon>
        <taxon>Acinetobacter</taxon>
        <taxon>Acinetobacter calcoaceticus/baumannii complex</taxon>
    </lineage>
</organism>
<dbReference type="EMBL" id="CU468230">
    <property type="protein sequence ID" value="CAP02313.1"/>
    <property type="molecule type" value="Genomic_DNA"/>
</dbReference>
<dbReference type="SMR" id="B0VKU4"/>
<dbReference type="KEGG" id="abm:ABSDF3027"/>
<dbReference type="HOGENOM" id="CLU_014218_8_2_6"/>
<dbReference type="Proteomes" id="UP000001741">
    <property type="component" value="Chromosome"/>
</dbReference>
<dbReference type="GO" id="GO:0009376">
    <property type="term" value="C:HslUV protease complex"/>
    <property type="evidence" value="ECO:0007669"/>
    <property type="project" value="TreeGrafter"/>
</dbReference>
<dbReference type="GO" id="GO:0005524">
    <property type="term" value="F:ATP binding"/>
    <property type="evidence" value="ECO:0007669"/>
    <property type="project" value="UniProtKB-UniRule"/>
</dbReference>
<dbReference type="GO" id="GO:0016887">
    <property type="term" value="F:ATP hydrolysis activity"/>
    <property type="evidence" value="ECO:0007669"/>
    <property type="project" value="InterPro"/>
</dbReference>
<dbReference type="GO" id="GO:0140662">
    <property type="term" value="F:ATP-dependent protein folding chaperone"/>
    <property type="evidence" value="ECO:0007669"/>
    <property type="project" value="InterPro"/>
</dbReference>
<dbReference type="GO" id="GO:0046983">
    <property type="term" value="F:protein dimerization activity"/>
    <property type="evidence" value="ECO:0007669"/>
    <property type="project" value="InterPro"/>
</dbReference>
<dbReference type="GO" id="GO:0051082">
    <property type="term" value="F:unfolded protein binding"/>
    <property type="evidence" value="ECO:0007669"/>
    <property type="project" value="UniProtKB-UniRule"/>
</dbReference>
<dbReference type="GO" id="GO:0008270">
    <property type="term" value="F:zinc ion binding"/>
    <property type="evidence" value="ECO:0007669"/>
    <property type="project" value="InterPro"/>
</dbReference>
<dbReference type="GO" id="GO:0051301">
    <property type="term" value="P:cell division"/>
    <property type="evidence" value="ECO:0007669"/>
    <property type="project" value="TreeGrafter"/>
</dbReference>
<dbReference type="GO" id="GO:0051603">
    <property type="term" value="P:proteolysis involved in protein catabolic process"/>
    <property type="evidence" value="ECO:0007669"/>
    <property type="project" value="TreeGrafter"/>
</dbReference>
<dbReference type="CDD" id="cd19497">
    <property type="entry name" value="RecA-like_ClpX"/>
    <property type="match status" value="1"/>
</dbReference>
<dbReference type="FunFam" id="1.10.8.60:FF:000002">
    <property type="entry name" value="ATP-dependent Clp protease ATP-binding subunit ClpX"/>
    <property type="match status" value="1"/>
</dbReference>
<dbReference type="FunFam" id="3.40.50.300:FF:000005">
    <property type="entry name" value="ATP-dependent Clp protease ATP-binding subunit ClpX"/>
    <property type="match status" value="1"/>
</dbReference>
<dbReference type="Gene3D" id="1.10.8.60">
    <property type="match status" value="1"/>
</dbReference>
<dbReference type="Gene3D" id="6.20.220.10">
    <property type="entry name" value="ClpX chaperone, C4-type zinc finger domain"/>
    <property type="match status" value="1"/>
</dbReference>
<dbReference type="Gene3D" id="3.40.50.300">
    <property type="entry name" value="P-loop containing nucleotide triphosphate hydrolases"/>
    <property type="match status" value="1"/>
</dbReference>
<dbReference type="HAMAP" id="MF_00175">
    <property type="entry name" value="ClpX"/>
    <property type="match status" value="1"/>
</dbReference>
<dbReference type="InterPro" id="IPR003593">
    <property type="entry name" value="AAA+_ATPase"/>
</dbReference>
<dbReference type="InterPro" id="IPR050052">
    <property type="entry name" value="ATP-dep_Clp_protease_ClpX"/>
</dbReference>
<dbReference type="InterPro" id="IPR003959">
    <property type="entry name" value="ATPase_AAA_core"/>
</dbReference>
<dbReference type="InterPro" id="IPR019489">
    <property type="entry name" value="Clp_ATPase_C"/>
</dbReference>
<dbReference type="InterPro" id="IPR004487">
    <property type="entry name" value="Clp_protease_ATP-bd_su_ClpX"/>
</dbReference>
<dbReference type="InterPro" id="IPR046425">
    <property type="entry name" value="ClpX_bact"/>
</dbReference>
<dbReference type="InterPro" id="IPR027417">
    <property type="entry name" value="P-loop_NTPase"/>
</dbReference>
<dbReference type="InterPro" id="IPR010603">
    <property type="entry name" value="Znf_CppX_C4"/>
</dbReference>
<dbReference type="InterPro" id="IPR038366">
    <property type="entry name" value="Znf_CppX_C4_sf"/>
</dbReference>
<dbReference type="NCBIfam" id="TIGR00382">
    <property type="entry name" value="clpX"/>
    <property type="match status" value="1"/>
</dbReference>
<dbReference type="NCBIfam" id="NF003745">
    <property type="entry name" value="PRK05342.1"/>
    <property type="match status" value="1"/>
</dbReference>
<dbReference type="PANTHER" id="PTHR48102:SF7">
    <property type="entry name" value="ATP-DEPENDENT CLP PROTEASE ATP-BINDING SUBUNIT CLPX-LIKE, MITOCHONDRIAL"/>
    <property type="match status" value="1"/>
</dbReference>
<dbReference type="PANTHER" id="PTHR48102">
    <property type="entry name" value="ATP-DEPENDENT CLP PROTEASE ATP-BINDING SUBUNIT CLPX-LIKE, MITOCHONDRIAL-RELATED"/>
    <property type="match status" value="1"/>
</dbReference>
<dbReference type="Pfam" id="PF07724">
    <property type="entry name" value="AAA_2"/>
    <property type="match status" value="1"/>
</dbReference>
<dbReference type="Pfam" id="PF10431">
    <property type="entry name" value="ClpB_D2-small"/>
    <property type="match status" value="1"/>
</dbReference>
<dbReference type="Pfam" id="PF06689">
    <property type="entry name" value="zf-C4_ClpX"/>
    <property type="match status" value="1"/>
</dbReference>
<dbReference type="SMART" id="SM00382">
    <property type="entry name" value="AAA"/>
    <property type="match status" value="1"/>
</dbReference>
<dbReference type="SMART" id="SM01086">
    <property type="entry name" value="ClpB_D2-small"/>
    <property type="match status" value="1"/>
</dbReference>
<dbReference type="SMART" id="SM00994">
    <property type="entry name" value="zf-C4_ClpX"/>
    <property type="match status" value="1"/>
</dbReference>
<dbReference type="SUPFAM" id="SSF57716">
    <property type="entry name" value="Glucocorticoid receptor-like (DNA-binding domain)"/>
    <property type="match status" value="1"/>
</dbReference>
<dbReference type="SUPFAM" id="SSF52540">
    <property type="entry name" value="P-loop containing nucleoside triphosphate hydrolases"/>
    <property type="match status" value="1"/>
</dbReference>
<dbReference type="PROSITE" id="PS51902">
    <property type="entry name" value="CLPX_ZB"/>
    <property type="match status" value="1"/>
</dbReference>
<gene>
    <name evidence="1" type="primary">clpX</name>
    <name type="ordered locus">ABSDF3027</name>
</gene>
<evidence type="ECO:0000255" key="1">
    <source>
        <dbReference type="HAMAP-Rule" id="MF_00175"/>
    </source>
</evidence>
<evidence type="ECO:0000255" key="2">
    <source>
        <dbReference type="PROSITE-ProRule" id="PRU01250"/>
    </source>
</evidence>
<accession>B0VKU4</accession>
<comment type="function">
    <text evidence="1">ATP-dependent specificity component of the Clp protease. It directs the protease to specific substrates. Can perform chaperone functions in the absence of ClpP.</text>
</comment>
<comment type="subunit">
    <text evidence="1">Component of the ClpX-ClpP complex. Forms a hexameric ring that, in the presence of ATP, binds to fourteen ClpP subunits assembled into a disk-like structure with a central cavity, resembling the structure of eukaryotic proteasomes.</text>
</comment>
<comment type="similarity">
    <text evidence="1">Belongs to the ClpX chaperone family.</text>
</comment>
<keyword id="KW-0067">ATP-binding</keyword>
<keyword id="KW-0143">Chaperone</keyword>
<keyword id="KW-0479">Metal-binding</keyword>
<keyword id="KW-0547">Nucleotide-binding</keyword>
<keyword id="KW-0862">Zinc</keyword>
<feature type="chain" id="PRO_1000097917" description="ATP-dependent Clp protease ATP-binding subunit ClpX">
    <location>
        <begin position="1"/>
        <end position="437"/>
    </location>
</feature>
<feature type="domain" description="ClpX-type ZB" evidence="2">
    <location>
        <begin position="1"/>
        <end position="52"/>
    </location>
</feature>
<feature type="binding site" evidence="2">
    <location>
        <position position="11"/>
    </location>
    <ligand>
        <name>Zn(2+)</name>
        <dbReference type="ChEBI" id="CHEBI:29105"/>
    </ligand>
</feature>
<feature type="binding site" evidence="2">
    <location>
        <position position="14"/>
    </location>
    <ligand>
        <name>Zn(2+)</name>
        <dbReference type="ChEBI" id="CHEBI:29105"/>
    </ligand>
</feature>
<feature type="binding site" evidence="2">
    <location>
        <position position="33"/>
    </location>
    <ligand>
        <name>Zn(2+)</name>
        <dbReference type="ChEBI" id="CHEBI:29105"/>
    </ligand>
</feature>
<feature type="binding site" evidence="2">
    <location>
        <position position="36"/>
    </location>
    <ligand>
        <name>Zn(2+)</name>
        <dbReference type="ChEBI" id="CHEBI:29105"/>
    </ligand>
</feature>
<feature type="binding site" evidence="1">
    <location>
        <begin position="119"/>
        <end position="126"/>
    </location>
    <ligand>
        <name>ATP</name>
        <dbReference type="ChEBI" id="CHEBI:30616"/>
    </ligand>
</feature>
<sequence>MSEHPQGQKHCSFCGKTQSEVGKLIAGEDAYICNECVDVCLDLVQTSQQVEAGDWASKALPKPHEIRAALDQYVIGQDLAKKTLSVAVYNHYKRLKVGQSGHVSKDVEIAKSNILLIGPTGSGKTLLAQTLARLLDVPFAMADATTLTEAGYVGEDVENIVQKLLQKADYDVEKAQKGIIYIDEIDKITRKSENPSITRDVSGEGVQQALLKMIEGTVASIPPQGGRKHPQQEFIQIDTSNILFICGGAFAGLEKIVQQRQEKGGIGFTADVKNKDETKKLAELFRQVEPTDLVKFGLIPEFIGRLPVIATLEELDEEALMQILTEPKNALTRQYQYLFNMENVDLVFEDSALRAVAKRALERNTGARGLRSILENVLLETMYDLPSRTDVGTVFINEAVINGEAEPVYKSERQPKEAVTHESVAKADLKVIDSKSA</sequence>
<reference key="1">
    <citation type="journal article" date="2008" name="PLoS ONE">
        <title>Comparative analysis of Acinetobacters: three genomes for three lifestyles.</title>
        <authorList>
            <person name="Vallenet D."/>
            <person name="Nordmann P."/>
            <person name="Barbe V."/>
            <person name="Poirel L."/>
            <person name="Mangenot S."/>
            <person name="Bataille E."/>
            <person name="Dossat C."/>
            <person name="Gas S."/>
            <person name="Kreimeyer A."/>
            <person name="Lenoble P."/>
            <person name="Oztas S."/>
            <person name="Poulain J."/>
            <person name="Segurens B."/>
            <person name="Robert C."/>
            <person name="Abergel C."/>
            <person name="Claverie J.-M."/>
            <person name="Raoult D."/>
            <person name="Medigue C."/>
            <person name="Weissenbach J."/>
            <person name="Cruveiller S."/>
        </authorList>
    </citation>
    <scope>NUCLEOTIDE SEQUENCE [LARGE SCALE GENOMIC DNA]</scope>
    <source>
        <strain>SDF</strain>
    </source>
</reference>
<name>CLPX_ACIBS</name>
<proteinExistence type="inferred from homology"/>